<protein>
    <recommendedName>
        <fullName evidence="1">Homogentisate 1,2-dioxygenase</fullName>
        <shortName evidence="1">HGDO</shortName>
        <ecNumber evidence="1">1.13.11.5</ecNumber>
    </recommendedName>
    <alternativeName>
        <fullName evidence="1">Homogentisate oxygenase</fullName>
    </alternativeName>
    <alternativeName>
        <fullName evidence="1">Homogentisic acid oxidase</fullName>
    </alternativeName>
    <alternativeName>
        <fullName evidence="1">Homogentisicase</fullName>
    </alternativeName>
</protein>
<accession>B2SM18</accession>
<reference key="1">
    <citation type="journal article" date="2008" name="BMC Genomics">
        <title>Genome sequence and rapid evolution of the rice pathogen Xanthomonas oryzae pv. oryzae PXO99A.</title>
        <authorList>
            <person name="Salzberg S.L."/>
            <person name="Sommer D.D."/>
            <person name="Schatz M.C."/>
            <person name="Phillippy A.M."/>
            <person name="Rabinowicz P.D."/>
            <person name="Tsuge S."/>
            <person name="Furutani A."/>
            <person name="Ochiai H."/>
            <person name="Delcher A.L."/>
            <person name="Kelley D."/>
            <person name="Madupu R."/>
            <person name="Puiu D."/>
            <person name="Radune D."/>
            <person name="Shumway M."/>
            <person name="Trapnell C."/>
            <person name="Aparna G."/>
            <person name="Jha G."/>
            <person name="Pandey A."/>
            <person name="Patil P.B."/>
            <person name="Ishihara H."/>
            <person name="Meyer D.F."/>
            <person name="Szurek B."/>
            <person name="Verdier V."/>
            <person name="Koebnik R."/>
            <person name="Dow J.M."/>
            <person name="Ryan R.P."/>
            <person name="Hirata H."/>
            <person name="Tsuyumu S."/>
            <person name="Won Lee S."/>
            <person name="Seo Y.-S."/>
            <person name="Sriariyanum M."/>
            <person name="Ronald P.C."/>
            <person name="Sonti R.V."/>
            <person name="Van Sluys M.-A."/>
            <person name="Leach J.E."/>
            <person name="White F.F."/>
            <person name="Bogdanove A.J."/>
        </authorList>
    </citation>
    <scope>NUCLEOTIDE SEQUENCE [LARGE SCALE GENOMIC DNA]</scope>
    <source>
        <strain>PXO99A</strain>
    </source>
</reference>
<name>HGD_XANOP</name>
<feature type="chain" id="PRO_1000119851" description="Homogentisate 1,2-dioxygenase">
    <location>
        <begin position="1"/>
        <end position="441"/>
    </location>
</feature>
<feature type="active site" description="Proton acceptor" evidence="1">
    <location>
        <position position="287"/>
    </location>
</feature>
<feature type="binding site" evidence="1">
    <location>
        <position position="330"/>
    </location>
    <ligand>
        <name>Fe cation</name>
        <dbReference type="ChEBI" id="CHEBI:24875"/>
    </ligand>
</feature>
<feature type="binding site" evidence="1">
    <location>
        <position position="336"/>
    </location>
    <ligand>
        <name>Fe cation</name>
        <dbReference type="ChEBI" id="CHEBI:24875"/>
    </ligand>
</feature>
<feature type="binding site" evidence="1">
    <location>
        <position position="345"/>
    </location>
    <ligand>
        <name>homogentisate</name>
        <dbReference type="ChEBI" id="CHEBI:16169"/>
    </ligand>
</feature>
<feature type="binding site" evidence="1">
    <location>
        <position position="366"/>
    </location>
    <ligand>
        <name>Fe cation</name>
        <dbReference type="ChEBI" id="CHEBI:24875"/>
    </ligand>
</feature>
<feature type="binding site" evidence="1">
    <location>
        <position position="366"/>
    </location>
    <ligand>
        <name>homogentisate</name>
        <dbReference type="ChEBI" id="CHEBI:16169"/>
    </ligand>
</feature>
<keyword id="KW-0223">Dioxygenase</keyword>
<keyword id="KW-0408">Iron</keyword>
<keyword id="KW-0479">Metal-binding</keyword>
<keyword id="KW-0560">Oxidoreductase</keyword>
<keyword id="KW-0585">Phenylalanine catabolism</keyword>
<keyword id="KW-0828">Tyrosine catabolism</keyword>
<dbReference type="EC" id="1.13.11.5" evidence="1"/>
<dbReference type="EMBL" id="CP000967">
    <property type="protein sequence ID" value="ACD57434.1"/>
    <property type="molecule type" value="Genomic_DNA"/>
</dbReference>
<dbReference type="RefSeq" id="WP_011409528.1">
    <property type="nucleotide sequence ID" value="NC_010717.2"/>
</dbReference>
<dbReference type="SMR" id="B2SM18"/>
<dbReference type="KEGG" id="xop:PXO_04215"/>
<dbReference type="eggNOG" id="COG3508">
    <property type="taxonomic scope" value="Bacteria"/>
</dbReference>
<dbReference type="HOGENOM" id="CLU_027174_0_0_6"/>
<dbReference type="UniPathway" id="UPA00139">
    <property type="reaction ID" value="UER00339"/>
</dbReference>
<dbReference type="Proteomes" id="UP000001740">
    <property type="component" value="Chromosome"/>
</dbReference>
<dbReference type="GO" id="GO:0005737">
    <property type="term" value="C:cytoplasm"/>
    <property type="evidence" value="ECO:0007669"/>
    <property type="project" value="TreeGrafter"/>
</dbReference>
<dbReference type="GO" id="GO:0004411">
    <property type="term" value="F:homogentisate 1,2-dioxygenase activity"/>
    <property type="evidence" value="ECO:0007669"/>
    <property type="project" value="UniProtKB-UniRule"/>
</dbReference>
<dbReference type="GO" id="GO:0005506">
    <property type="term" value="F:iron ion binding"/>
    <property type="evidence" value="ECO:0007669"/>
    <property type="project" value="UniProtKB-UniRule"/>
</dbReference>
<dbReference type="GO" id="GO:0006559">
    <property type="term" value="P:L-phenylalanine catabolic process"/>
    <property type="evidence" value="ECO:0007669"/>
    <property type="project" value="UniProtKB-UniRule"/>
</dbReference>
<dbReference type="GO" id="GO:0006572">
    <property type="term" value="P:tyrosine catabolic process"/>
    <property type="evidence" value="ECO:0007669"/>
    <property type="project" value="UniProtKB-UniRule"/>
</dbReference>
<dbReference type="CDD" id="cd07000">
    <property type="entry name" value="cupin_HGO_N"/>
    <property type="match status" value="1"/>
</dbReference>
<dbReference type="FunFam" id="2.60.120.10:FF:000053">
    <property type="entry name" value="Homogentisate 1,2-dioxygenase"/>
    <property type="match status" value="1"/>
</dbReference>
<dbReference type="Gene3D" id="2.60.120.10">
    <property type="entry name" value="Jelly Rolls"/>
    <property type="match status" value="1"/>
</dbReference>
<dbReference type="HAMAP" id="MF_00334">
    <property type="entry name" value="Homogentis_dioxygen"/>
    <property type="match status" value="1"/>
</dbReference>
<dbReference type="InterPro" id="IPR046451">
    <property type="entry name" value="HgmA_C"/>
</dbReference>
<dbReference type="InterPro" id="IPR046452">
    <property type="entry name" value="HgmA_N"/>
</dbReference>
<dbReference type="InterPro" id="IPR005708">
    <property type="entry name" value="Homogentis_dOase"/>
</dbReference>
<dbReference type="InterPro" id="IPR022950">
    <property type="entry name" value="Homogentis_dOase_bac"/>
</dbReference>
<dbReference type="InterPro" id="IPR014710">
    <property type="entry name" value="RmlC-like_jellyroll"/>
</dbReference>
<dbReference type="InterPro" id="IPR011051">
    <property type="entry name" value="RmlC_Cupin_sf"/>
</dbReference>
<dbReference type="NCBIfam" id="TIGR01015">
    <property type="entry name" value="hmgA"/>
    <property type="match status" value="1"/>
</dbReference>
<dbReference type="PANTHER" id="PTHR11056">
    <property type="entry name" value="HOMOGENTISATE 1,2-DIOXYGENASE"/>
    <property type="match status" value="1"/>
</dbReference>
<dbReference type="PANTHER" id="PTHR11056:SF0">
    <property type="entry name" value="HOMOGENTISATE 1,2-DIOXYGENASE"/>
    <property type="match status" value="1"/>
</dbReference>
<dbReference type="Pfam" id="PF04209">
    <property type="entry name" value="HgmA_C"/>
    <property type="match status" value="1"/>
</dbReference>
<dbReference type="Pfam" id="PF20510">
    <property type="entry name" value="HgmA_N"/>
    <property type="match status" value="1"/>
</dbReference>
<dbReference type="SUPFAM" id="SSF51182">
    <property type="entry name" value="RmlC-like cupins"/>
    <property type="match status" value="1"/>
</dbReference>
<organism>
    <name type="scientific">Xanthomonas oryzae pv. oryzae (strain PXO99A)</name>
    <dbReference type="NCBI Taxonomy" id="360094"/>
    <lineage>
        <taxon>Bacteria</taxon>
        <taxon>Pseudomonadati</taxon>
        <taxon>Pseudomonadota</taxon>
        <taxon>Gammaproteobacteria</taxon>
        <taxon>Lysobacterales</taxon>
        <taxon>Lysobacteraceae</taxon>
        <taxon>Xanthomonas</taxon>
    </lineage>
</organism>
<proteinExistence type="inferred from homology"/>
<evidence type="ECO:0000255" key="1">
    <source>
        <dbReference type="HAMAP-Rule" id="MF_00334"/>
    </source>
</evidence>
<sequence>MHNPQHYMTGFGNEFATEAVAGSLPVGQNSPQRVAHGLYAEQLSGTAFTAPRGENRRSWLYRIRPAAVHGRFSLIEQSRLHNDFGGGPVPPDQMRWSPLPLPATPTDFVDGLYTMAGNGSPEAMTGVAVHLYAANASMHGRFFYNADGELLLVPQLGRLRVCTELGVLELEPQQIGVIPRGVRFRVELLDSAARGYVCENFGGLLRLPDLGPIGANGLANPRDFETPRAAFEQRDGAFELVAKFQGHLWRADIDHSPLDVVAWHGNYAPYRYDLRRFNTIGSISFDHPDPSIFTVLTSPSDTHGTANMDFAIFPPRWLVAQHTFRPPWFHRNVASEFMGLVHGVYDAKAEGFAPGGASLHNCMSGHGPDAATFDKASQADLTRPDVIAETMAFMFETRAVLRPTQQALSAAHRQADYQQCWSGLRAAFQHPPAKNTTSVLR</sequence>
<comment type="function">
    <text evidence="1">Involved in the catabolism of homogentisate (2,5-dihydroxyphenylacetate or 2,5-OH-PhAc), a central intermediate in the degradation of phenylalanine and tyrosine. Catalyzes the oxidative ring cleavage of the aromatic ring of homogentisate to yield maleylacetoacetate.</text>
</comment>
<comment type="catalytic activity">
    <reaction evidence="1">
        <text>homogentisate + O2 = 4-maleylacetoacetate + H(+)</text>
        <dbReference type="Rhea" id="RHEA:15449"/>
        <dbReference type="ChEBI" id="CHEBI:15378"/>
        <dbReference type="ChEBI" id="CHEBI:15379"/>
        <dbReference type="ChEBI" id="CHEBI:16169"/>
        <dbReference type="ChEBI" id="CHEBI:17105"/>
        <dbReference type="EC" id="1.13.11.5"/>
    </reaction>
</comment>
<comment type="cofactor">
    <cofactor evidence="1">
        <name>Fe cation</name>
        <dbReference type="ChEBI" id="CHEBI:24875"/>
    </cofactor>
</comment>
<comment type="pathway">
    <text evidence="1">Amino-acid degradation; L-phenylalanine degradation; acetoacetate and fumarate from L-phenylalanine: step 4/6.</text>
</comment>
<comment type="subunit">
    <text evidence="1">Hexamer; dimer of trimers.</text>
</comment>
<comment type="similarity">
    <text evidence="1">Belongs to the homogentisate dioxygenase family.</text>
</comment>
<gene>
    <name evidence="1" type="primary">hmgA</name>
    <name type="ordered locus">PXO_04215</name>
</gene>